<feature type="chain" id="PRO_1000089940" description="Phosphate acyltransferase">
    <location>
        <begin position="1"/>
        <end position="335"/>
    </location>
</feature>
<comment type="function">
    <text evidence="1">Catalyzes the reversible formation of acyl-phosphate (acyl-PO(4)) from acyl-[acyl-carrier-protein] (acyl-ACP). This enzyme utilizes acyl-ACP as fatty acyl donor, but not acyl-CoA.</text>
</comment>
<comment type="catalytic activity">
    <reaction evidence="1">
        <text>a fatty acyl-[ACP] + phosphate = an acyl phosphate + holo-[ACP]</text>
        <dbReference type="Rhea" id="RHEA:42292"/>
        <dbReference type="Rhea" id="RHEA-COMP:9685"/>
        <dbReference type="Rhea" id="RHEA-COMP:14125"/>
        <dbReference type="ChEBI" id="CHEBI:43474"/>
        <dbReference type="ChEBI" id="CHEBI:59918"/>
        <dbReference type="ChEBI" id="CHEBI:64479"/>
        <dbReference type="ChEBI" id="CHEBI:138651"/>
        <dbReference type="EC" id="2.3.1.274"/>
    </reaction>
</comment>
<comment type="pathway">
    <text evidence="1">Lipid metabolism; phospholipid metabolism.</text>
</comment>
<comment type="subunit">
    <text evidence="1">Homodimer. Probably interacts with PlsY.</text>
</comment>
<comment type="subcellular location">
    <subcellularLocation>
        <location evidence="1">Cytoplasm</location>
    </subcellularLocation>
    <text evidence="1">Associated with the membrane possibly through PlsY.</text>
</comment>
<comment type="similarity">
    <text evidence="1">Belongs to the PlsX family.</text>
</comment>
<gene>
    <name evidence="1" type="primary">plsX</name>
    <name type="ordered locus">Sez_0021</name>
</gene>
<sequence length="335" mass="35423">MKKIAIDAMGGDHAPKAIVEGVNQAIEAFSDIEVQLYGDQSRIESYLVKSDRVSIVHTDEKINSDDEPAKAIRRKKNASMVLAARAVKDGRADAVLSAGNTGALLAAGLFIIGRIKGVDRPGLLSTLPTVDGSGFDMLDLGANAENTAEHLHQYAILGSFYAKHVRGIAKPRIGLLNNGTEATKGDSLRKEVYNFLASDSSLQFIGNVEARDLMSGVADVVVADGFTGNAVLKSIEGTAMSIMGQLKSAIAVGGVKAKFGALLLKSSLYDLKDTLDYSSAGGAVLFGLKAPLVKSHGSSDAKAIFHTIKQVRTMLETDVVGQLVEEFSKESDVND</sequence>
<reference key="1">
    <citation type="journal article" date="2008" name="PLoS ONE">
        <title>Genome sequence of a lancefield group C Streptococcus zooepidemicus strain causing epidemic nephritis: new information about an old disease.</title>
        <authorList>
            <person name="Beres S.B."/>
            <person name="Sesso R."/>
            <person name="Pinto S.W.L."/>
            <person name="Hoe N.P."/>
            <person name="Porcella S.F."/>
            <person name="Deleo F.R."/>
            <person name="Musser J.M."/>
        </authorList>
    </citation>
    <scope>NUCLEOTIDE SEQUENCE [LARGE SCALE GENOMIC DNA]</scope>
    <source>
        <strain>MGCS10565</strain>
    </source>
</reference>
<keyword id="KW-0963">Cytoplasm</keyword>
<keyword id="KW-0444">Lipid biosynthesis</keyword>
<keyword id="KW-0443">Lipid metabolism</keyword>
<keyword id="KW-0594">Phospholipid biosynthesis</keyword>
<keyword id="KW-1208">Phospholipid metabolism</keyword>
<keyword id="KW-0808">Transferase</keyword>
<name>PLSX_STREM</name>
<proteinExistence type="inferred from homology"/>
<organism>
    <name type="scientific">Streptococcus equi subsp. zooepidemicus (strain MGCS10565)</name>
    <dbReference type="NCBI Taxonomy" id="552526"/>
    <lineage>
        <taxon>Bacteria</taxon>
        <taxon>Bacillati</taxon>
        <taxon>Bacillota</taxon>
        <taxon>Bacilli</taxon>
        <taxon>Lactobacillales</taxon>
        <taxon>Streptococcaceae</taxon>
        <taxon>Streptococcus</taxon>
    </lineage>
</organism>
<protein>
    <recommendedName>
        <fullName evidence="1">Phosphate acyltransferase</fullName>
        <ecNumber evidence="1">2.3.1.274</ecNumber>
    </recommendedName>
    <alternativeName>
        <fullName evidence="1">Acyl-ACP phosphotransacylase</fullName>
    </alternativeName>
    <alternativeName>
        <fullName evidence="1">Acyl-[acyl-carrier-protein]--phosphate acyltransferase</fullName>
    </alternativeName>
    <alternativeName>
        <fullName evidence="1">Phosphate-acyl-ACP acyltransferase</fullName>
    </alternativeName>
</protein>
<evidence type="ECO:0000255" key="1">
    <source>
        <dbReference type="HAMAP-Rule" id="MF_00019"/>
    </source>
</evidence>
<accession>B4U5G7</accession>
<dbReference type="EC" id="2.3.1.274" evidence="1"/>
<dbReference type="EMBL" id="CP001129">
    <property type="protein sequence ID" value="ACG61408.1"/>
    <property type="molecule type" value="Genomic_DNA"/>
</dbReference>
<dbReference type="RefSeq" id="WP_012514701.1">
    <property type="nucleotide sequence ID" value="NC_011134.1"/>
</dbReference>
<dbReference type="SMR" id="B4U5G7"/>
<dbReference type="KEGG" id="sez:Sez_0021"/>
<dbReference type="HOGENOM" id="CLU_039379_1_1_9"/>
<dbReference type="UniPathway" id="UPA00085"/>
<dbReference type="Proteomes" id="UP000001873">
    <property type="component" value="Chromosome"/>
</dbReference>
<dbReference type="GO" id="GO:0005737">
    <property type="term" value="C:cytoplasm"/>
    <property type="evidence" value="ECO:0007669"/>
    <property type="project" value="UniProtKB-SubCell"/>
</dbReference>
<dbReference type="GO" id="GO:0043811">
    <property type="term" value="F:phosphate:acyl-[acyl carrier protein] acyltransferase activity"/>
    <property type="evidence" value="ECO:0007669"/>
    <property type="project" value="UniProtKB-UniRule"/>
</dbReference>
<dbReference type="GO" id="GO:0006633">
    <property type="term" value="P:fatty acid biosynthetic process"/>
    <property type="evidence" value="ECO:0007669"/>
    <property type="project" value="UniProtKB-UniRule"/>
</dbReference>
<dbReference type="GO" id="GO:0008654">
    <property type="term" value="P:phospholipid biosynthetic process"/>
    <property type="evidence" value="ECO:0007669"/>
    <property type="project" value="UniProtKB-KW"/>
</dbReference>
<dbReference type="Gene3D" id="3.40.718.10">
    <property type="entry name" value="Isopropylmalate Dehydrogenase"/>
    <property type="match status" value="1"/>
</dbReference>
<dbReference type="HAMAP" id="MF_00019">
    <property type="entry name" value="PlsX"/>
    <property type="match status" value="1"/>
</dbReference>
<dbReference type="InterPro" id="IPR003664">
    <property type="entry name" value="FA_synthesis"/>
</dbReference>
<dbReference type="InterPro" id="IPR012281">
    <property type="entry name" value="Phospholipid_synth_PlsX-like"/>
</dbReference>
<dbReference type="NCBIfam" id="TIGR00182">
    <property type="entry name" value="plsX"/>
    <property type="match status" value="1"/>
</dbReference>
<dbReference type="PANTHER" id="PTHR30100">
    <property type="entry name" value="FATTY ACID/PHOSPHOLIPID SYNTHESIS PROTEIN PLSX"/>
    <property type="match status" value="1"/>
</dbReference>
<dbReference type="PANTHER" id="PTHR30100:SF1">
    <property type="entry name" value="PHOSPHATE ACYLTRANSFERASE"/>
    <property type="match status" value="1"/>
</dbReference>
<dbReference type="Pfam" id="PF02504">
    <property type="entry name" value="FA_synthesis"/>
    <property type="match status" value="1"/>
</dbReference>
<dbReference type="PIRSF" id="PIRSF002465">
    <property type="entry name" value="Phsphlp_syn_PlsX"/>
    <property type="match status" value="1"/>
</dbReference>
<dbReference type="SUPFAM" id="SSF53659">
    <property type="entry name" value="Isocitrate/Isopropylmalate dehydrogenase-like"/>
    <property type="match status" value="1"/>
</dbReference>